<sequence length="141" mass="15654">MDSRICTSFARLMASALCVSTLLVTAMPFDLRRGSSDTDLDLQGHVDLGLDDLDKLRLIFPPGLIEEAFSQAQGKVDMPLPRQRTSSRSSERWAPKSKRFDFGFAGLDTYDAIHRALEQPARGTSNSGSGYNMLMKMQRHG</sequence>
<name>CP2_APLCA</name>
<keyword id="KW-0027">Amidation</keyword>
<keyword id="KW-0165">Cleavage on pair of basic residues</keyword>
<keyword id="KW-0903">Direct protein sequencing</keyword>
<keyword id="KW-0527">Neuropeptide</keyword>
<keyword id="KW-0964">Secreted</keyword>
<keyword id="KW-0732">Signal</keyword>
<proteinExistence type="evidence at protein level"/>
<evidence type="ECO:0000256" key="1">
    <source>
        <dbReference type="SAM" id="MobiDB-lite"/>
    </source>
</evidence>
<evidence type="ECO:0000269" key="2">
    <source>
    </source>
</evidence>
<evidence type="ECO:0000269" key="3">
    <source>
    </source>
</evidence>
<accession>Q8T0Y7</accession>
<dbReference type="EMBL" id="AY033828">
    <property type="protein sequence ID" value="AAK56550.1"/>
    <property type="molecule type" value="mRNA"/>
</dbReference>
<dbReference type="PIR" id="A57272">
    <property type="entry name" value="A57272"/>
</dbReference>
<dbReference type="RefSeq" id="NP_001191491.1">
    <property type="nucleotide sequence ID" value="NM_001204562.1"/>
</dbReference>
<dbReference type="RefSeq" id="XP_035827035.1">
    <property type="nucleotide sequence ID" value="XM_035971142.1"/>
</dbReference>
<dbReference type="EnsemblMetazoa" id="NM_001204562.1">
    <property type="protein sequence ID" value="NP_001191491.1"/>
    <property type="gene ID" value="GeneID_100533251"/>
</dbReference>
<dbReference type="EnsemblMetazoa" id="XM_035971142.1">
    <property type="protein sequence ID" value="XP_035827035.1"/>
    <property type="gene ID" value="GeneID_100533251"/>
</dbReference>
<dbReference type="GeneID" id="100533251"/>
<dbReference type="CTD" id="100533251"/>
<dbReference type="Proteomes" id="UP000694888">
    <property type="component" value="Unplaced"/>
</dbReference>
<dbReference type="GO" id="GO:0005576">
    <property type="term" value="C:extracellular region"/>
    <property type="evidence" value="ECO:0007669"/>
    <property type="project" value="UniProtKB-SubCell"/>
</dbReference>
<dbReference type="GO" id="GO:0007218">
    <property type="term" value="P:neuropeptide signaling pathway"/>
    <property type="evidence" value="ECO:0007669"/>
    <property type="project" value="UniProtKB-KW"/>
</dbReference>
<protein>
    <recommendedName>
        <fullName>Neuropeptides CP2</fullName>
    </recommendedName>
    <component>
        <recommendedName>
            <fullName>CP2-derived peptide 1</fullName>
        </recommendedName>
    </component>
    <component>
        <recommendedName>
            <fullName>CP2-derived peptide 2</fullName>
        </recommendedName>
    </component>
    <component>
        <recommendedName>
            <fullName>CP2-derived peptide 3</fullName>
        </recommendedName>
    </component>
    <component>
        <recommendedName>
            <fullName>CP2-derived peptide 4</fullName>
        </recommendedName>
    </component>
    <component>
        <recommendedName>
            <fullName>CP2-derived peptide 5</fullName>
        </recommendedName>
    </component>
    <component>
        <recommendedName>
            <fullName>CP2-derived peptide 6</fullName>
        </recommendedName>
    </component>
    <component>
        <recommendedName>
            <fullName>CP2-derived peptide 7</fullName>
        </recommendedName>
    </component>
    <component>
        <recommendedName>
            <fullName>CP2-derived peptide 8</fullName>
        </recommendedName>
    </component>
    <component>
        <recommendedName>
            <fullName>CP2-derived peptide 9</fullName>
        </recommendedName>
    </component>
    <component>
        <recommendedName>
            <fullName>CP2-derived peptide 10</fullName>
        </recommendedName>
    </component>
    <component>
        <recommendedName>
            <fullName>Neuropeptide CP2</fullName>
        </recommendedName>
        <alternativeName>
            <fullName>Neuropeptide cerebral peptide 2</fullName>
        </alternativeName>
    </component>
</protein>
<feature type="signal peptide" evidence="3">
    <location>
        <begin position="1"/>
        <end position="26"/>
    </location>
</feature>
<feature type="peptide" id="PRO_0000265124" description="CP2-derived peptide 1" evidence="3">
    <location>
        <begin position="27"/>
        <end position="68"/>
    </location>
</feature>
<feature type="peptide" id="PRO_0000265125" description="CP2-derived peptide 2">
    <location>
        <begin position="27"/>
        <end position="31"/>
    </location>
</feature>
<feature type="peptide" id="PRO_0000265126" description="CP2-derived peptide 3" evidence="3">
    <location>
        <begin position="34"/>
        <end position="68"/>
    </location>
</feature>
<feature type="peptide" id="PRO_0000265127" description="CP2-derived peptide 4">
    <location>
        <begin position="69"/>
        <end position="97"/>
    </location>
</feature>
<feature type="peptide" id="PRO_0000265128" description="CP2-derived peptide 5">
    <location>
        <begin position="69"/>
        <end position="87"/>
    </location>
</feature>
<feature type="peptide" id="PRO_0000265129" description="CP2-derived peptide 6">
    <location>
        <begin position="69"/>
        <end position="86"/>
    </location>
</feature>
<feature type="peptide" id="PRO_0000265130" description="CP2-derived peptide 7">
    <location>
        <begin position="69"/>
        <end position="83"/>
    </location>
</feature>
<feature type="peptide" id="PRO_0000265131" description="CP2-derived peptide 8">
    <location>
        <begin position="69"/>
        <end position="74"/>
    </location>
</feature>
<feature type="peptide" id="PRO_0000265132" description="CP2-derived peptide 9">
    <location>
        <begin position="89"/>
        <end position="97"/>
    </location>
</feature>
<feature type="peptide" id="PRO_0000265133" description="CP2-derived peptide 10">
    <location>
        <begin position="89"/>
        <end position="95"/>
    </location>
</feature>
<feature type="peptide" id="PRO_0000265134" description="Neuropeptide CP2">
    <location>
        <begin position="100"/>
        <end position="140"/>
    </location>
</feature>
<feature type="region of interest" description="Disordered" evidence="1">
    <location>
        <begin position="75"/>
        <end position="94"/>
    </location>
</feature>
<feature type="modified residue" description="Histidine amide" evidence="3">
    <location>
        <position position="140"/>
    </location>
</feature>
<gene>
    <name type="primary">CP2PP</name>
</gene>
<organism>
    <name type="scientific">Aplysia californica</name>
    <name type="common">California sea hare</name>
    <dbReference type="NCBI Taxonomy" id="6500"/>
    <lineage>
        <taxon>Eukaryota</taxon>
        <taxon>Metazoa</taxon>
        <taxon>Spiralia</taxon>
        <taxon>Lophotrochozoa</taxon>
        <taxon>Mollusca</taxon>
        <taxon>Gastropoda</taxon>
        <taxon>Heterobranchia</taxon>
        <taxon>Euthyneura</taxon>
        <taxon>Tectipleura</taxon>
        <taxon>Aplysiida</taxon>
        <taxon>Aplysioidea</taxon>
        <taxon>Aplysiidae</taxon>
        <taxon>Aplysia</taxon>
    </lineage>
</organism>
<comment type="function">
    <text evidence="2">Mediates intrinsic neuromodulation.</text>
</comment>
<comment type="subcellular location">
    <subcellularLocation>
        <location evidence="3">Secreted</location>
    </subcellularLocation>
</comment>
<comment type="tissue specificity">
    <text evidence="3">Neurons.</text>
</comment>
<comment type="mass spectrometry" mass="622.3" method="MALDI" evidence="3">
    <molecule>CP2-derived peptide 2</molecule>
</comment>
<comment type="mass spectrometry" mass="636.36" method="MALDI" evidence="3">
    <molecule>CP2-derived peptide 8</molecule>
</comment>
<comment type="mass spectrometry" mass="832.34" method="MALDI" evidence="3">
    <molecule>CP2-derived peptide 10</molecule>
</comment>
<comment type="mass spectrometry" mass="1047.43" method="MALDI" evidence="3">
    <molecule>CP2-derived peptide 9</molecule>
</comment>
<comment type="mass spectrometry" mass="1701.85" method="MALDI" evidence="3">
    <molecule>CP2-derived peptide 7</molecule>
</comment>
<comment type="mass spectrometry" mass="2045.81" method="MALDI" evidence="3">
    <molecule>CP2-derived peptide 6</molecule>
</comment>
<comment type="mass spectrometry" mass="2133.12" method="MALDI" evidence="3">
    <molecule>CP2-derived peptide 5</molecule>
</comment>
<comment type="mass spectrometry" mass="3319.3" method="MALDI" evidence="3">
    <molecule>CP2-derived peptide 4</molecule>
</comment>
<comment type="mass spectrometry" mass="3779.2" method="MALDI" evidence="3">
    <molecule>CP2-derived peptide 3</molecule>
</comment>
<comment type="mass spectrometry" mass="4592.0" method="MALDI" evidence="3">
    <molecule>Neuropeptide CP2</molecule>
</comment>
<comment type="mass spectrometry" mass="4695.38" method="MALDI" evidence="3">
    <molecule>CP2-derived peptide 1</molecule>
</comment>
<reference key="1">
    <citation type="journal article" date="2001" name="Peptides">
        <title>Cloning, expression and processing of the CP2 neuropeptide precursor of Aplysia.</title>
        <authorList>
            <person name="Vilim F.S."/>
            <person name="Alexeeva V."/>
            <person name="Moroz L.L."/>
            <person name="Li L."/>
            <person name="Moroz T.P."/>
            <person name="Sweedler J.V."/>
            <person name="Weiss K.R."/>
        </authorList>
    </citation>
    <scope>NUCLEOTIDE SEQUENCE [MRNA]</scope>
    <scope>PROTEIN SEQUENCE OF 27-68; 27-31; 34-68; 69-97; 69-87; 69-86; 69-83; 69-74; 89-97 AND 89-95</scope>
    <scope>SUBCELLULAR LOCATION</scope>
    <scope>TISSUE SPECIFICITY</scope>
    <scope>AMIDATION AT HIS-140</scope>
    <scope>MASS SPECTROMETRY</scope>
    <source>
        <tissue>CNS</tissue>
    </source>
</reference>
<reference key="2">
    <citation type="journal article" date="2000" name="J. Neurophysiol.">
        <title>Intrinsic and extrinsic modulation of a single central pattern generating circuit.</title>
        <authorList>
            <person name="Morgan P.T."/>
            <person name="Perrins R."/>
            <person name="Lloyd P.E."/>
            <person name="Weiss K.R."/>
        </authorList>
    </citation>
    <scope>FUNCTION</scope>
</reference>